<reference key="1">
    <citation type="submission" date="2007-05" db="EMBL/GenBank/DDBJ databases">
        <title>Complete sequence of chromosome of Staphylococcus aureus subsp. aureus JH9.</title>
        <authorList>
            <consortium name="US DOE Joint Genome Institute"/>
            <person name="Copeland A."/>
            <person name="Lucas S."/>
            <person name="Lapidus A."/>
            <person name="Barry K."/>
            <person name="Detter J.C."/>
            <person name="Glavina del Rio T."/>
            <person name="Hammon N."/>
            <person name="Israni S."/>
            <person name="Pitluck S."/>
            <person name="Chain P."/>
            <person name="Malfatti S."/>
            <person name="Shin M."/>
            <person name="Vergez L."/>
            <person name="Schmutz J."/>
            <person name="Larimer F."/>
            <person name="Land M."/>
            <person name="Hauser L."/>
            <person name="Kyrpides N."/>
            <person name="Kim E."/>
            <person name="Tomasz A."/>
            <person name="Richardson P."/>
        </authorList>
    </citation>
    <scope>NUCLEOTIDE SEQUENCE [LARGE SCALE GENOMIC DNA]</scope>
    <source>
        <strain>JH9</strain>
    </source>
</reference>
<protein>
    <recommendedName>
        <fullName>Serine protease SplF</fullName>
        <ecNumber>3.4.21.-</ecNumber>
    </recommendedName>
</protein>
<proteinExistence type="inferred from homology"/>
<organism>
    <name type="scientific">Staphylococcus aureus (strain JH9)</name>
    <dbReference type="NCBI Taxonomy" id="359786"/>
    <lineage>
        <taxon>Bacteria</taxon>
        <taxon>Bacillati</taxon>
        <taxon>Bacillota</taxon>
        <taxon>Bacilli</taxon>
        <taxon>Bacillales</taxon>
        <taxon>Staphylococcaceae</taxon>
        <taxon>Staphylococcus</taxon>
    </lineage>
</organism>
<evidence type="ECO:0000250" key="1"/>
<evidence type="ECO:0000305" key="2"/>
<comment type="subcellular location">
    <subcellularLocation>
        <location evidence="1">Secreted</location>
    </subcellularLocation>
</comment>
<comment type="similarity">
    <text evidence="2">Belongs to the peptidase S1B family.</text>
</comment>
<keyword id="KW-0378">Hydrolase</keyword>
<keyword id="KW-0645">Protease</keyword>
<keyword id="KW-0964">Secreted</keyword>
<keyword id="KW-0720">Serine protease</keyword>
<keyword id="KW-0732">Signal</keyword>
<accession>A5ITX5</accession>
<name>SPLF_STAA9</name>
<dbReference type="EC" id="3.4.21.-"/>
<dbReference type="EMBL" id="CP000703">
    <property type="protein sequence ID" value="ABQ49648.1"/>
    <property type="molecule type" value="Genomic_DNA"/>
</dbReference>
<dbReference type="RefSeq" id="WP_001038702.1">
    <property type="nucleotide sequence ID" value="NC_009487.1"/>
</dbReference>
<dbReference type="SMR" id="A5ITX5"/>
<dbReference type="MEROPS" id="S01.526"/>
<dbReference type="KEGG" id="saj:SaurJH9_1861"/>
<dbReference type="HOGENOM" id="CLU_073589_2_0_9"/>
<dbReference type="GO" id="GO:0005576">
    <property type="term" value="C:extracellular region"/>
    <property type="evidence" value="ECO:0007669"/>
    <property type="project" value="UniProtKB-SubCell"/>
</dbReference>
<dbReference type="GO" id="GO:0008236">
    <property type="term" value="F:serine-type peptidase activity"/>
    <property type="evidence" value="ECO:0007669"/>
    <property type="project" value="UniProtKB-KW"/>
</dbReference>
<dbReference type="GO" id="GO:0006508">
    <property type="term" value="P:proteolysis"/>
    <property type="evidence" value="ECO:0007669"/>
    <property type="project" value="UniProtKB-KW"/>
</dbReference>
<dbReference type="Gene3D" id="2.40.10.10">
    <property type="entry name" value="Trypsin-like serine proteases"/>
    <property type="match status" value="2"/>
</dbReference>
<dbReference type="InterPro" id="IPR009003">
    <property type="entry name" value="Peptidase_S1_PA"/>
</dbReference>
<dbReference type="InterPro" id="IPR043504">
    <property type="entry name" value="Peptidase_S1_PA_chymotrypsin"/>
</dbReference>
<dbReference type="InterPro" id="IPR008256">
    <property type="entry name" value="Peptidase_S1B"/>
</dbReference>
<dbReference type="InterPro" id="IPR028301">
    <property type="entry name" value="V8_his_AS"/>
</dbReference>
<dbReference type="PANTHER" id="PTHR43019:SF23">
    <property type="entry name" value="PROTEASE DO-LIKE 5, CHLOROPLASTIC"/>
    <property type="match status" value="1"/>
</dbReference>
<dbReference type="PANTHER" id="PTHR43019">
    <property type="entry name" value="SERINE ENDOPROTEASE DEGS"/>
    <property type="match status" value="1"/>
</dbReference>
<dbReference type="Pfam" id="PF13365">
    <property type="entry name" value="Trypsin_2"/>
    <property type="match status" value="1"/>
</dbReference>
<dbReference type="PRINTS" id="PR00839">
    <property type="entry name" value="V8PROTEASE"/>
</dbReference>
<dbReference type="SUPFAM" id="SSF50494">
    <property type="entry name" value="Trypsin-like serine proteases"/>
    <property type="match status" value="1"/>
</dbReference>
<dbReference type="PROSITE" id="PS00672">
    <property type="entry name" value="V8_HIS"/>
    <property type="match status" value="1"/>
</dbReference>
<sequence length="239" mass="25580">MNKNIIIKSIAALTILTSITGVGTTVVDGIQQTAKAENSVKLITNTNVAPYSGVTWMGAGTGFVVGNHTIITNKHVTYHMKVGDEIKAHPNGFYNNGGGLYKVTKIVDYPGKEDIAVVQVEEKSTQPKGRKFKDFTSKFNIASEAKENEPISVIGYPNPNGNKLQMYESTGKVLSVNGNIVSSDAIIQPGSSGSPILNSKHEAIGVIYAGNKPSGESTRGFAVYFSPEIKKFIADNLDK</sequence>
<gene>
    <name type="primary">splF</name>
    <name type="ordered locus">SaurJH9_1861</name>
</gene>
<feature type="signal peptide" evidence="1">
    <location>
        <begin position="1"/>
        <end position="36"/>
    </location>
</feature>
<feature type="chain" id="PRO_5000247318" description="Serine protease SplF">
    <location>
        <begin position="37"/>
        <end position="239"/>
    </location>
</feature>
<feature type="active site" description="Charge relay system" evidence="1">
    <location>
        <position position="75"/>
    </location>
</feature>
<feature type="active site" description="Charge relay system" evidence="1">
    <location>
        <position position="114"/>
    </location>
</feature>
<feature type="active site" description="Charge relay system" evidence="1">
    <location>
        <position position="192"/>
    </location>
</feature>